<accession>Q69016</accession>
<gene>
    <name type="ORF">ORF2</name>
</gene>
<keyword id="KW-1232">Capsid decoration protein</keyword>
<keyword id="KW-0167">Capsid protein</keyword>
<keyword id="KW-1035">Host cytoplasm</keyword>
<keyword id="KW-0946">Virion</keyword>
<name>VP2_SVM93</name>
<protein>
    <recommendedName>
        <fullName>Minor capsid protein VP2</fullName>
    </recommendedName>
</protein>
<comment type="function">
    <text evidence="1">Minor structural protein that forms a portal-like structure at a unique three-fold axis of symmetry, following binding to the host receptor. The channel formed by VP2 may allow the delivery of the viral genome through the host endosomal membrane.</text>
</comment>
<comment type="subunit">
    <text evidence="1">Homooligomer. The portal-like structure consists in 12 copies of VP2. Interacts with capsid protein VP1.</text>
</comment>
<comment type="subcellular location">
    <subcellularLocation>
        <location evidence="1">Virion</location>
    </subcellularLocation>
    <subcellularLocation>
        <location evidence="2">Host cytoplasm</location>
    </subcellularLocation>
</comment>
<comment type="domain">
    <text evidence="1">The N-terminus domain points away from the virion surface.</text>
</comment>
<comment type="miscellaneous">
    <text evidence="1">Translated by a ribosomal termination-reinitiation process from the bicistronic mRNA coding for VP1 and VP2.</text>
</comment>
<comment type="similarity">
    <text evidence="2">Belongs to the sapovirus VP2 family.</text>
</comment>
<evidence type="ECO:0000250" key="1">
    <source>
        <dbReference type="UniProtKB" id="P28711"/>
    </source>
</evidence>
<evidence type="ECO:0000305" key="2"/>
<reference key="1">
    <citation type="journal article" date="1995" name="Arch. Virol.">
        <title>Human enteric caliciviruses have a unique genome structure and are distinct from the Norwalk-like viruses.</title>
        <authorList>
            <person name="Liu B.L."/>
            <person name="Clarke I.N."/>
            <person name="Caul E.O."/>
            <person name="Lambden P.R."/>
        </authorList>
    </citation>
    <scope>NUCLEOTIDE SEQUENCE [GENOMIC RNA]</scope>
</reference>
<sequence>MSWLVGALQTFGSLADVAGTVSNIVYQQRQAAQLEKQNELMETWMNKQEALQKSQMELTRDLSINGPAARVQSALDAGFDEVSARRIAGSGERVIWGNLDRPIMHAGTMDSIRQTKHLDSLSHSLATFKNGTPFGKPAPPTTKFGKPQATTAQINIGHNPGSSSV</sequence>
<organismHost>
    <name type="scientific">Homo sapiens</name>
    <name type="common">Human</name>
    <dbReference type="NCBI Taxonomy" id="9606"/>
</organismHost>
<feature type="chain" id="PRO_0000341652" description="Minor capsid protein VP2">
    <location>
        <begin position="1"/>
        <end position="165"/>
    </location>
</feature>
<dbReference type="EMBL" id="X86560">
    <property type="protein sequence ID" value="CAA60261.1"/>
    <property type="molecule type" value="Genomic_RNA"/>
</dbReference>
<dbReference type="Proteomes" id="UP000113838">
    <property type="component" value="Genome"/>
</dbReference>
<dbReference type="GO" id="GO:0030430">
    <property type="term" value="C:host cell cytoplasm"/>
    <property type="evidence" value="ECO:0007669"/>
    <property type="project" value="UniProtKB-SubCell"/>
</dbReference>
<dbReference type="GO" id="GO:0098021">
    <property type="term" value="C:viral capsid, decoration"/>
    <property type="evidence" value="ECO:0007669"/>
    <property type="project" value="UniProtKB-KW"/>
</dbReference>
<dbReference type="InterPro" id="IPR008437">
    <property type="entry name" value="Minor_structural_calicivir"/>
</dbReference>
<dbReference type="Pfam" id="PF05752">
    <property type="entry name" value="Calici_MSP"/>
    <property type="match status" value="1"/>
</dbReference>
<proteinExistence type="inferred from homology"/>
<organism>
    <name type="scientific">Sapporo virus (strain Human/United Kingdom/Manchester/1993)</name>
    <name type="common">Hu/SV/Man/1993/UK</name>
    <dbReference type="NCBI Taxonomy" id="82659"/>
    <lineage>
        <taxon>Viruses</taxon>
        <taxon>Riboviria</taxon>
        <taxon>Orthornavirae</taxon>
        <taxon>Pisuviricota</taxon>
        <taxon>Pisoniviricetes</taxon>
        <taxon>Picornavirales</taxon>
        <taxon>Caliciviridae</taxon>
        <taxon>Sapovirus</taxon>
        <taxon>Sapporo virus</taxon>
    </lineage>
</organism>